<accession>A9UXG6</accession>
<evidence type="ECO:0000255" key="1">
    <source>
        <dbReference type="HAMAP-Rule" id="MF_03144"/>
    </source>
</evidence>
<protein>
    <recommendedName>
        <fullName evidence="1">RNA-splicing ligase RtcB homolog</fullName>
        <ecNumber evidence="1">6.5.1.8</ecNumber>
    </recommendedName>
    <alternativeName>
        <fullName evidence="1">3'-phosphate/5'-hydroxy nucleic acid ligase</fullName>
    </alternativeName>
</protein>
<feature type="chain" id="PRO_0000407245" description="RNA-splicing ligase RtcB homolog">
    <location>
        <begin position="1"/>
        <end position="497"/>
    </location>
</feature>
<feature type="active site" description="GMP-histidine intermediate" evidence="1">
    <location>
        <position position="420"/>
    </location>
</feature>
<feature type="binding site" evidence="1">
    <location>
        <position position="111"/>
    </location>
    <ligand>
        <name>Mn(2+)</name>
        <dbReference type="ChEBI" id="CHEBI:29035"/>
        <label>1</label>
    </ligand>
</feature>
<feature type="binding site" evidence="1">
    <location>
        <position position="114"/>
    </location>
    <ligand>
        <name>Mn(2+)</name>
        <dbReference type="ChEBI" id="CHEBI:29035"/>
        <label>1</label>
    </ligand>
</feature>
<feature type="binding site" evidence="1">
    <location>
        <position position="114"/>
    </location>
    <ligand>
        <name>Mn(2+)</name>
        <dbReference type="ChEBI" id="CHEBI:29035"/>
        <label>2</label>
    </ligand>
</feature>
<feature type="binding site" evidence="1">
    <location>
        <begin position="218"/>
        <end position="222"/>
    </location>
    <ligand>
        <name>GMP</name>
        <dbReference type="ChEBI" id="CHEBI:58115"/>
    </ligand>
</feature>
<feature type="binding site" evidence="1">
    <location>
        <position position="219"/>
    </location>
    <ligand>
        <name>Mn(2+)</name>
        <dbReference type="ChEBI" id="CHEBI:29035"/>
        <label>1</label>
    </ligand>
</feature>
<feature type="binding site" evidence="1">
    <location>
        <position position="251"/>
    </location>
    <ligand>
        <name>Mn(2+)</name>
        <dbReference type="ChEBI" id="CHEBI:29035"/>
        <label>2</label>
    </ligand>
</feature>
<feature type="binding site" evidence="1">
    <location>
        <begin position="345"/>
        <end position="346"/>
    </location>
    <ligand>
        <name>GMP</name>
        <dbReference type="ChEBI" id="CHEBI:58115"/>
    </ligand>
</feature>
<feature type="binding site" evidence="1">
    <location>
        <position position="345"/>
    </location>
    <ligand>
        <name>Mn(2+)</name>
        <dbReference type="ChEBI" id="CHEBI:29035"/>
        <label>2</label>
    </ligand>
</feature>
<feature type="binding site" evidence="1">
    <location>
        <begin position="394"/>
        <end position="397"/>
    </location>
    <ligand>
        <name>GMP</name>
        <dbReference type="ChEBI" id="CHEBI:58115"/>
    </ligand>
</feature>
<feature type="binding site" evidence="1">
    <location>
        <position position="401"/>
    </location>
    <ligand>
        <name>GMP</name>
        <dbReference type="ChEBI" id="CHEBI:58115"/>
    </ligand>
</feature>
<feature type="binding site" evidence="1">
    <location>
        <begin position="420"/>
        <end position="423"/>
    </location>
    <ligand>
        <name>GMP</name>
        <dbReference type="ChEBI" id="CHEBI:58115"/>
    </ligand>
</feature>
<feature type="binding site" evidence="1">
    <location>
        <position position="496"/>
    </location>
    <ligand>
        <name>GMP</name>
        <dbReference type="ChEBI" id="CHEBI:58115"/>
    </ligand>
</feature>
<dbReference type="EC" id="6.5.1.8" evidence="1"/>
<dbReference type="EMBL" id="CH991549">
    <property type="protein sequence ID" value="EDQ90003.1"/>
    <property type="molecule type" value="Genomic_DNA"/>
</dbReference>
<dbReference type="RefSeq" id="XP_001745425.1">
    <property type="nucleotide sequence ID" value="XM_001745373.1"/>
</dbReference>
<dbReference type="SMR" id="A9UXG6"/>
<dbReference type="FunCoup" id="A9UXG6">
    <property type="interactions" value="1128"/>
</dbReference>
<dbReference type="STRING" id="81824.A9UXG6"/>
<dbReference type="EnsemblProtists" id="EDQ90003">
    <property type="protein sequence ID" value="EDQ90003"/>
    <property type="gene ID" value="MONBRDRAFT_24995"/>
</dbReference>
<dbReference type="KEGG" id="mbr:MONBRDRAFT_24995"/>
<dbReference type="eggNOG" id="KOG3833">
    <property type="taxonomic scope" value="Eukaryota"/>
</dbReference>
<dbReference type="InParanoid" id="A9UXG6"/>
<dbReference type="OMA" id="QTRGVEC"/>
<dbReference type="Proteomes" id="UP000001357">
    <property type="component" value="Unassembled WGS sequence"/>
</dbReference>
<dbReference type="GO" id="GO:0005634">
    <property type="term" value="C:nucleus"/>
    <property type="evidence" value="ECO:0000318"/>
    <property type="project" value="GO_Central"/>
</dbReference>
<dbReference type="GO" id="GO:0072669">
    <property type="term" value="C:tRNA-splicing ligase complex"/>
    <property type="evidence" value="ECO:0000318"/>
    <property type="project" value="GO_Central"/>
</dbReference>
<dbReference type="GO" id="GO:0005525">
    <property type="term" value="F:GTP binding"/>
    <property type="evidence" value="ECO:0007669"/>
    <property type="project" value="UniProtKB-KW"/>
</dbReference>
<dbReference type="GO" id="GO:0046872">
    <property type="term" value="F:metal ion binding"/>
    <property type="evidence" value="ECO:0007669"/>
    <property type="project" value="UniProtKB-KW"/>
</dbReference>
<dbReference type="GO" id="GO:0170057">
    <property type="term" value="F:RNA ligase (GTP) activity"/>
    <property type="evidence" value="ECO:0007669"/>
    <property type="project" value="UniProtKB-EC"/>
</dbReference>
<dbReference type="GO" id="GO:0006388">
    <property type="term" value="P:tRNA splicing, via endonucleolytic cleavage and ligation"/>
    <property type="evidence" value="ECO:0000318"/>
    <property type="project" value="GO_Central"/>
</dbReference>
<dbReference type="FunFam" id="3.90.1860.10:FF:000001">
    <property type="entry name" value="tRNA-splicing ligase RtcB homolog"/>
    <property type="match status" value="1"/>
</dbReference>
<dbReference type="Gene3D" id="3.90.1860.10">
    <property type="entry name" value="tRNA-splicing ligase RtcB"/>
    <property type="match status" value="1"/>
</dbReference>
<dbReference type="HAMAP" id="MF_03144">
    <property type="entry name" value="RtcB_euk"/>
    <property type="match status" value="1"/>
</dbReference>
<dbReference type="InterPro" id="IPR001233">
    <property type="entry name" value="RtcB"/>
</dbReference>
<dbReference type="InterPro" id="IPR036025">
    <property type="entry name" value="RtcB-like_sf"/>
</dbReference>
<dbReference type="InterPro" id="IPR027513">
    <property type="entry name" value="RtcB_euk"/>
</dbReference>
<dbReference type="PANTHER" id="PTHR11118">
    <property type="entry name" value="RNA-SPLICING LIGASE RTCB HOMOLOG"/>
    <property type="match status" value="1"/>
</dbReference>
<dbReference type="PANTHER" id="PTHR11118:SF1">
    <property type="entry name" value="RNA-SPLICING LIGASE RTCB HOMOLOG"/>
    <property type="match status" value="1"/>
</dbReference>
<dbReference type="Pfam" id="PF01139">
    <property type="entry name" value="RtcB"/>
    <property type="match status" value="1"/>
</dbReference>
<dbReference type="SUPFAM" id="SSF103365">
    <property type="entry name" value="Hypothetical protein PH1602"/>
    <property type="match status" value="1"/>
</dbReference>
<dbReference type="PROSITE" id="PS01288">
    <property type="entry name" value="UPF0027"/>
    <property type="match status" value="1"/>
</dbReference>
<name>RTCB_MONBE</name>
<keyword id="KW-0342">GTP-binding</keyword>
<keyword id="KW-0436">Ligase</keyword>
<keyword id="KW-0464">Manganese</keyword>
<keyword id="KW-0479">Metal-binding</keyword>
<keyword id="KW-0547">Nucleotide-binding</keyword>
<keyword id="KW-1185">Reference proteome</keyword>
<keyword id="KW-0819">tRNA processing</keyword>
<organism>
    <name type="scientific">Monosiga brevicollis</name>
    <name type="common">Choanoflagellate</name>
    <dbReference type="NCBI Taxonomy" id="81824"/>
    <lineage>
        <taxon>Eukaryota</taxon>
        <taxon>Choanoflagellata</taxon>
        <taxon>Craspedida</taxon>
        <taxon>Salpingoecidae</taxon>
        <taxon>Monosiga</taxon>
    </lineage>
</organism>
<proteinExistence type="inferred from homology"/>
<comment type="function">
    <text evidence="1">Catalytic subunit of the tRNA-splicing ligase complex that acts by directly joining spliced tRNA halves to mature-sized tRNAs by incorporating the precursor-derived splice junction phosphate into the mature tRNA as a canonical 3',5'-phosphodiester. May act as an RNA ligase with broad substrate specificity, and may function toward other RNAs.</text>
</comment>
<comment type="catalytic activity">
    <reaction evidence="1">
        <text>a 3'-end 3'-phospho-ribonucleotide-RNA + a 5'-end dephospho-ribonucleoside-RNA + GTP = a ribonucleotidyl-ribonucleotide-RNA + GMP + diphosphate</text>
        <dbReference type="Rhea" id="RHEA:68076"/>
        <dbReference type="Rhea" id="RHEA-COMP:10463"/>
        <dbReference type="Rhea" id="RHEA-COMP:13936"/>
        <dbReference type="Rhea" id="RHEA-COMP:17355"/>
        <dbReference type="ChEBI" id="CHEBI:33019"/>
        <dbReference type="ChEBI" id="CHEBI:37565"/>
        <dbReference type="ChEBI" id="CHEBI:58115"/>
        <dbReference type="ChEBI" id="CHEBI:83062"/>
        <dbReference type="ChEBI" id="CHEBI:138284"/>
        <dbReference type="ChEBI" id="CHEBI:173118"/>
        <dbReference type="EC" id="6.5.1.8"/>
    </reaction>
</comment>
<comment type="catalytic activity">
    <reaction evidence="1">
        <text>a 3'-end 2',3'-cyclophospho-ribonucleotide-RNA + a 5'-end dephospho-ribonucleoside-RNA + GTP + H2O = a ribonucleotidyl-ribonucleotide-RNA + GMP + diphosphate + H(+)</text>
        <dbReference type="Rhea" id="RHEA:68080"/>
        <dbReference type="Rhea" id="RHEA-COMP:10464"/>
        <dbReference type="Rhea" id="RHEA-COMP:13936"/>
        <dbReference type="Rhea" id="RHEA-COMP:17355"/>
        <dbReference type="ChEBI" id="CHEBI:15377"/>
        <dbReference type="ChEBI" id="CHEBI:15378"/>
        <dbReference type="ChEBI" id="CHEBI:33019"/>
        <dbReference type="ChEBI" id="CHEBI:37565"/>
        <dbReference type="ChEBI" id="CHEBI:58115"/>
        <dbReference type="ChEBI" id="CHEBI:83064"/>
        <dbReference type="ChEBI" id="CHEBI:138284"/>
        <dbReference type="ChEBI" id="CHEBI:173118"/>
        <dbReference type="EC" id="6.5.1.8"/>
    </reaction>
</comment>
<comment type="cofactor">
    <cofactor evidence="1">
        <name>Mn(2+)</name>
        <dbReference type="ChEBI" id="CHEBI:29035"/>
    </cofactor>
    <text evidence="1">Binds 2 manganese ions per subunit.</text>
</comment>
<comment type="subunit">
    <text evidence="1">Catalytic component of the tRNA-splicing ligase complex.</text>
</comment>
<comment type="miscellaneous">
    <text evidence="1">Ligation probably proceeds through 3 nucleotidyl transfer steps, with 2',3'-cyclic phosphate termini being hydrolyzed to 3'-P termini in a step that precedes 3'-P activation with GMP. In the first nucleotidyl transfer step, RTCB reacts with GTP to form a covalent RTCB-histidine-GMP intermediate with release of PPi; in the second step, the GMP moiety is transferred to the RNA 3'-P; in the third step, the 5'-OH from the opposite RNA strand attacks the activated 3'-P to form a 3',5'-phosphodiester bond and release GMP.</text>
</comment>
<comment type="similarity">
    <text evidence="1">Belongs to the RtcB family.</text>
</comment>
<reference key="1">
    <citation type="journal article" date="2008" name="Nature">
        <title>The genome of the choanoflagellate Monosiga brevicollis and the origin of metazoans.</title>
        <authorList>
            <consortium name="JGI Sequencing"/>
            <person name="King N."/>
            <person name="Westbrook M.J."/>
            <person name="Young S.L."/>
            <person name="Kuo A."/>
            <person name="Abedin M."/>
            <person name="Chapman J."/>
            <person name="Fairclough S."/>
            <person name="Hellsten U."/>
            <person name="Isogai Y."/>
            <person name="Letunic I."/>
            <person name="Marr M."/>
            <person name="Pincus D."/>
            <person name="Putnam N."/>
            <person name="Rokas A."/>
            <person name="Wright K.J."/>
            <person name="Zuzow R."/>
            <person name="Dirks W."/>
            <person name="Good M."/>
            <person name="Goodstein D."/>
            <person name="Lemons D."/>
            <person name="Li W."/>
            <person name="Lyons J.B."/>
            <person name="Morris A."/>
            <person name="Nichols S."/>
            <person name="Richter D.J."/>
            <person name="Salamov A."/>
            <person name="Bork P."/>
            <person name="Lim W.A."/>
            <person name="Manning G."/>
            <person name="Miller W.T."/>
            <person name="McGinnis W."/>
            <person name="Shapiro H."/>
            <person name="Tjian R."/>
            <person name="Grigoriev I.V."/>
            <person name="Rokhsar D."/>
        </authorList>
    </citation>
    <scope>NUCLEOTIDE SEQUENCE [LARGE SCALE GENOMIC DNA]</scope>
    <source>
        <strain>MX1 / ATCC 50154</strain>
    </source>
</reference>
<gene>
    <name type="ORF">24995</name>
</gene>
<sequence length="497" mass="54297">MKYLERLTPSCWRIKPGFVPNMKVEGRFYVNKALEALMLEELQQFASARGVGGFLPAVKQIANVASLPGIVGASVGLPDVHSGYGFAIGNMAAFDMDDPEAIVSPGGVGFDINCGVRLLRTNLTLEDVEPVKEQLAQSLFDHIPVGVGSKGVIPMNAKDLEEALEMGMDWSLREGYAWAEDKEHCEEYGRMLQADASKVSARAKKRGLPQLGTLGAGNHYAEIQVVEEIYDKEAAAKMGINKKNQICVMIHSGSRGLGHQVATDALVAMEKAMKRDGIEVNDRQLACARIHSEEGQNYLKAMAAAANYAWVNRSTMTFLCRQAFAKQFNTTPEELDMHVIYDVSHNIAKTERHMVNGTERTLLVHRKGSTRAFPPHHPLIPVDYQLIGQPVLIGGTMGTCSYVLTGTDTGFRDTFGSTCHGAGRALSRAKSRRTLDYQQVLDKLDKKGIAIRVASPKLVMEEAPESYKDVTAVVDTCHAAGISKKVVKLRPIAVIKG</sequence>